<keyword id="KW-0963">Cytoplasm</keyword>
<keyword id="KW-0275">Fatty acid biosynthesis</keyword>
<keyword id="KW-0276">Fatty acid metabolism</keyword>
<keyword id="KW-0444">Lipid biosynthesis</keyword>
<keyword id="KW-0443">Lipid metabolism</keyword>
<keyword id="KW-0596">Phosphopantetheine</keyword>
<keyword id="KW-0597">Phosphoprotein</keyword>
<keyword id="KW-1185">Reference proteome</keyword>
<dbReference type="EMBL" id="CP000481">
    <property type="protein sequence ID" value="ABK52649.1"/>
    <property type="molecule type" value="Genomic_DNA"/>
</dbReference>
<dbReference type="RefSeq" id="WP_011719712.1">
    <property type="nucleotide sequence ID" value="NC_008578.1"/>
</dbReference>
<dbReference type="SMR" id="A0LT89"/>
<dbReference type="FunCoup" id="A0LT89">
    <property type="interactions" value="285"/>
</dbReference>
<dbReference type="STRING" id="351607.Acel_0876"/>
<dbReference type="KEGG" id="ace:Acel_0876"/>
<dbReference type="eggNOG" id="COG0236">
    <property type="taxonomic scope" value="Bacteria"/>
</dbReference>
<dbReference type="HOGENOM" id="CLU_108696_5_6_11"/>
<dbReference type="InParanoid" id="A0LT89"/>
<dbReference type="OrthoDB" id="9804551at2"/>
<dbReference type="UniPathway" id="UPA00094"/>
<dbReference type="Proteomes" id="UP000008221">
    <property type="component" value="Chromosome"/>
</dbReference>
<dbReference type="GO" id="GO:0005829">
    <property type="term" value="C:cytosol"/>
    <property type="evidence" value="ECO:0007669"/>
    <property type="project" value="TreeGrafter"/>
</dbReference>
<dbReference type="GO" id="GO:0016020">
    <property type="term" value="C:membrane"/>
    <property type="evidence" value="ECO:0007669"/>
    <property type="project" value="GOC"/>
</dbReference>
<dbReference type="GO" id="GO:0000035">
    <property type="term" value="F:acyl binding"/>
    <property type="evidence" value="ECO:0007669"/>
    <property type="project" value="TreeGrafter"/>
</dbReference>
<dbReference type="GO" id="GO:0000036">
    <property type="term" value="F:acyl carrier activity"/>
    <property type="evidence" value="ECO:0007669"/>
    <property type="project" value="UniProtKB-UniRule"/>
</dbReference>
<dbReference type="GO" id="GO:0009245">
    <property type="term" value="P:lipid A biosynthetic process"/>
    <property type="evidence" value="ECO:0007669"/>
    <property type="project" value="TreeGrafter"/>
</dbReference>
<dbReference type="Gene3D" id="1.10.1200.10">
    <property type="entry name" value="ACP-like"/>
    <property type="match status" value="1"/>
</dbReference>
<dbReference type="HAMAP" id="MF_01217">
    <property type="entry name" value="Acyl_carrier"/>
    <property type="match status" value="1"/>
</dbReference>
<dbReference type="InterPro" id="IPR003231">
    <property type="entry name" value="ACP"/>
</dbReference>
<dbReference type="InterPro" id="IPR036736">
    <property type="entry name" value="ACP-like_sf"/>
</dbReference>
<dbReference type="InterPro" id="IPR009081">
    <property type="entry name" value="PP-bd_ACP"/>
</dbReference>
<dbReference type="NCBIfam" id="TIGR00517">
    <property type="entry name" value="acyl_carrier"/>
    <property type="match status" value="1"/>
</dbReference>
<dbReference type="NCBIfam" id="NF002147">
    <property type="entry name" value="PRK00982.1-1"/>
    <property type="match status" value="1"/>
</dbReference>
<dbReference type="NCBIfam" id="NF002148">
    <property type="entry name" value="PRK00982.1-2"/>
    <property type="match status" value="1"/>
</dbReference>
<dbReference type="NCBIfam" id="NF002150">
    <property type="entry name" value="PRK00982.1-4"/>
    <property type="match status" value="1"/>
</dbReference>
<dbReference type="PANTHER" id="PTHR20863">
    <property type="entry name" value="ACYL CARRIER PROTEIN"/>
    <property type="match status" value="1"/>
</dbReference>
<dbReference type="PANTHER" id="PTHR20863:SF76">
    <property type="entry name" value="CARRIER DOMAIN-CONTAINING PROTEIN"/>
    <property type="match status" value="1"/>
</dbReference>
<dbReference type="Pfam" id="PF00550">
    <property type="entry name" value="PP-binding"/>
    <property type="match status" value="1"/>
</dbReference>
<dbReference type="SUPFAM" id="SSF47336">
    <property type="entry name" value="ACP-like"/>
    <property type="match status" value="1"/>
</dbReference>
<dbReference type="PROSITE" id="PS50075">
    <property type="entry name" value="CARRIER"/>
    <property type="match status" value="1"/>
</dbReference>
<feature type="chain" id="PRO_1000066541" description="Acyl carrier protein">
    <location>
        <begin position="1"/>
        <end position="84"/>
    </location>
</feature>
<feature type="domain" description="Carrier" evidence="2">
    <location>
        <begin position="6"/>
        <end position="81"/>
    </location>
</feature>
<feature type="modified residue" description="O-(pantetheine 4'-phosphoryl)serine" evidence="2">
    <location>
        <position position="41"/>
    </location>
</feature>
<proteinExistence type="inferred from homology"/>
<accession>A0LT89</accession>
<comment type="function">
    <text evidence="1">Carrier of the growing fatty acid chain in fatty acid biosynthesis.</text>
</comment>
<comment type="pathway">
    <text evidence="1">Lipid metabolism; fatty acid biosynthesis.</text>
</comment>
<comment type="subcellular location">
    <subcellularLocation>
        <location evidence="1">Cytoplasm</location>
    </subcellularLocation>
</comment>
<comment type="PTM">
    <text evidence="1">4'-phosphopantetheine is transferred from CoA to a specific serine of apo-ACP by AcpS. This modification is essential for activity because fatty acids are bound in thioester linkage to the sulfhydryl of the prosthetic group.</text>
</comment>
<comment type="similarity">
    <text evidence="1">Belongs to the acyl carrier protein (ACP) family.</text>
</comment>
<name>ACP_ACIC1</name>
<organism>
    <name type="scientific">Acidothermus cellulolyticus (strain ATCC 43068 / DSM 8971 / 11B)</name>
    <dbReference type="NCBI Taxonomy" id="351607"/>
    <lineage>
        <taxon>Bacteria</taxon>
        <taxon>Bacillati</taxon>
        <taxon>Actinomycetota</taxon>
        <taxon>Actinomycetes</taxon>
        <taxon>Acidothermales</taxon>
        <taxon>Acidothermaceae</taxon>
        <taxon>Acidothermus</taxon>
    </lineage>
</organism>
<gene>
    <name evidence="1" type="primary">acpP</name>
    <name type="ordered locus">Acel_0876</name>
</gene>
<sequence>MALSKEEILTGLAEIINEVAGIPTSDVQPEKSFTDDLDVDSLSMVEVVVAAEEKFGVRIPDDEVKNLKTVGDAVDYIANATVSA</sequence>
<reference key="1">
    <citation type="journal article" date="2009" name="Genome Res.">
        <title>Complete genome of the cellulolytic thermophile Acidothermus cellulolyticus 11B provides insights into its ecophysiological and evolutionary adaptations.</title>
        <authorList>
            <person name="Barabote R.D."/>
            <person name="Xie G."/>
            <person name="Leu D.H."/>
            <person name="Normand P."/>
            <person name="Necsulea A."/>
            <person name="Daubin V."/>
            <person name="Medigue C."/>
            <person name="Adney W.S."/>
            <person name="Xu X.C."/>
            <person name="Lapidus A."/>
            <person name="Parales R.E."/>
            <person name="Detter C."/>
            <person name="Pujic P."/>
            <person name="Bruce D."/>
            <person name="Lavire C."/>
            <person name="Challacombe J.F."/>
            <person name="Brettin T.S."/>
            <person name="Berry A.M."/>
        </authorList>
    </citation>
    <scope>NUCLEOTIDE SEQUENCE [LARGE SCALE GENOMIC DNA]</scope>
    <source>
        <strain>ATCC 43068 / DSM 8971 / 11B</strain>
    </source>
</reference>
<evidence type="ECO:0000255" key="1">
    <source>
        <dbReference type="HAMAP-Rule" id="MF_01217"/>
    </source>
</evidence>
<evidence type="ECO:0000255" key="2">
    <source>
        <dbReference type="PROSITE-ProRule" id="PRU00258"/>
    </source>
</evidence>
<protein>
    <recommendedName>
        <fullName evidence="1">Acyl carrier protein</fullName>
        <shortName evidence="1">ACP</shortName>
    </recommendedName>
</protein>